<reference key="1">
    <citation type="journal article" date="1998" name="Mol. Biol. Evol.">
        <title>Molecular systematics and paleobiogeography of the South American sigmodontine rodents.</title>
        <authorList>
            <person name="Engel S.R."/>
            <person name="Hogan K.M."/>
            <person name="Taylor J.F."/>
            <person name="Davis S.K."/>
        </authorList>
    </citation>
    <scope>NUCLEOTIDE SEQUENCE [GENOMIC DNA]</scope>
</reference>
<accession>O21535</accession>
<sequence length="98" mass="10783">MTLVMFNITIAFTLSLLGTLMFRTHLMSTLLCLEGMMLCLFIMAVITSLDTHPMIMYPIPIIILVFAACEAAVGLALLAMVSSTYGTDYVQNLNLLQC</sequence>
<name>NU4LM_NYCSU</name>
<keyword id="KW-0249">Electron transport</keyword>
<keyword id="KW-0472">Membrane</keyword>
<keyword id="KW-0496">Mitochondrion</keyword>
<keyword id="KW-0999">Mitochondrion inner membrane</keyword>
<keyword id="KW-0520">NAD</keyword>
<keyword id="KW-0679">Respiratory chain</keyword>
<keyword id="KW-1278">Translocase</keyword>
<keyword id="KW-0812">Transmembrane</keyword>
<keyword id="KW-1133">Transmembrane helix</keyword>
<keyword id="KW-0813">Transport</keyword>
<keyword id="KW-0830">Ubiquinone</keyword>
<proteinExistence type="inferred from homology"/>
<comment type="function">
    <text evidence="1">Core subunit of the mitochondrial membrane respiratory chain NADH dehydrogenase (Complex I) which catalyzes electron transfer from NADH through the respiratory chain, using ubiquinone as an electron acceptor. Part of the enzyme membrane arm which is embedded in the lipid bilayer and involved in proton translocation.</text>
</comment>
<comment type="catalytic activity">
    <reaction evidence="1">
        <text>a ubiquinone + NADH + 5 H(+)(in) = a ubiquinol + NAD(+) + 4 H(+)(out)</text>
        <dbReference type="Rhea" id="RHEA:29091"/>
        <dbReference type="Rhea" id="RHEA-COMP:9565"/>
        <dbReference type="Rhea" id="RHEA-COMP:9566"/>
        <dbReference type="ChEBI" id="CHEBI:15378"/>
        <dbReference type="ChEBI" id="CHEBI:16389"/>
        <dbReference type="ChEBI" id="CHEBI:17976"/>
        <dbReference type="ChEBI" id="CHEBI:57540"/>
        <dbReference type="ChEBI" id="CHEBI:57945"/>
        <dbReference type="EC" id="7.1.1.2"/>
    </reaction>
    <physiologicalReaction direction="left-to-right" evidence="1">
        <dbReference type="Rhea" id="RHEA:29092"/>
    </physiologicalReaction>
</comment>
<comment type="subunit">
    <text evidence="2">Core subunit of respiratory chain NADH dehydrogenase (Complex I) which is composed of 45 different subunits.</text>
</comment>
<comment type="subcellular location">
    <subcellularLocation>
        <location evidence="2">Mitochondrion inner membrane</location>
        <topology evidence="3">Multi-pass membrane protein</topology>
    </subcellularLocation>
</comment>
<comment type="similarity">
    <text evidence="4">Belongs to the complex I subunit 4L family.</text>
</comment>
<geneLocation type="mitochondrion"/>
<dbReference type="EC" id="7.1.1.2"/>
<dbReference type="EMBL" id="U83811">
    <property type="protein sequence ID" value="AAB87203.1"/>
    <property type="molecule type" value="Genomic_DNA"/>
</dbReference>
<dbReference type="SMR" id="O21535"/>
<dbReference type="GO" id="GO:0005743">
    <property type="term" value="C:mitochondrial inner membrane"/>
    <property type="evidence" value="ECO:0000250"/>
    <property type="project" value="UniProtKB"/>
</dbReference>
<dbReference type="GO" id="GO:0045271">
    <property type="term" value="C:respiratory chain complex I"/>
    <property type="evidence" value="ECO:0000250"/>
    <property type="project" value="UniProtKB"/>
</dbReference>
<dbReference type="GO" id="GO:0008137">
    <property type="term" value="F:NADH dehydrogenase (ubiquinone) activity"/>
    <property type="evidence" value="ECO:0000250"/>
    <property type="project" value="UniProtKB"/>
</dbReference>
<dbReference type="GO" id="GO:0042773">
    <property type="term" value="P:ATP synthesis coupled electron transport"/>
    <property type="evidence" value="ECO:0007669"/>
    <property type="project" value="InterPro"/>
</dbReference>
<dbReference type="FunFam" id="1.10.287.3510:FF:000002">
    <property type="entry name" value="NADH-ubiquinone oxidoreductase chain 4L"/>
    <property type="match status" value="1"/>
</dbReference>
<dbReference type="Gene3D" id="1.10.287.3510">
    <property type="match status" value="1"/>
</dbReference>
<dbReference type="InterPro" id="IPR001133">
    <property type="entry name" value="NADH_UbQ_OxRdtase_chain4L/K"/>
</dbReference>
<dbReference type="InterPro" id="IPR039428">
    <property type="entry name" value="NUOK/Mnh_C1-like"/>
</dbReference>
<dbReference type="PANTHER" id="PTHR11434:SF0">
    <property type="entry name" value="NADH-UBIQUINONE OXIDOREDUCTASE CHAIN 4L"/>
    <property type="match status" value="1"/>
</dbReference>
<dbReference type="PANTHER" id="PTHR11434">
    <property type="entry name" value="NADH-UBIQUINONE OXIDOREDUCTASE SUBUNIT ND4L"/>
    <property type="match status" value="1"/>
</dbReference>
<dbReference type="Pfam" id="PF00420">
    <property type="entry name" value="Oxidored_q2"/>
    <property type="match status" value="1"/>
</dbReference>
<gene>
    <name type="primary">MT-ND4L</name>
    <name type="synonym">MTND4L</name>
    <name type="synonym">NADH4L</name>
    <name type="synonym">ND4L</name>
</gene>
<feature type="chain" id="PRO_0000254951" description="NADH-ubiquinone oxidoreductase chain 4L">
    <location>
        <begin position="1"/>
        <end position="98"/>
    </location>
</feature>
<feature type="transmembrane region" description="Helical" evidence="3">
    <location>
        <begin position="2"/>
        <end position="22"/>
    </location>
</feature>
<feature type="transmembrane region" description="Helical" evidence="3">
    <location>
        <begin position="26"/>
        <end position="46"/>
    </location>
</feature>
<feature type="transmembrane region" description="Helical" evidence="3">
    <location>
        <begin position="61"/>
        <end position="81"/>
    </location>
</feature>
<protein>
    <recommendedName>
        <fullName>NADH-ubiquinone oxidoreductase chain 4L</fullName>
        <ecNumber>7.1.1.2</ecNumber>
    </recommendedName>
    <alternativeName>
        <fullName>NADH dehydrogenase subunit 4L</fullName>
    </alternativeName>
</protein>
<evidence type="ECO:0000250" key="1">
    <source>
        <dbReference type="UniProtKB" id="P03901"/>
    </source>
</evidence>
<evidence type="ECO:0000250" key="2">
    <source>
        <dbReference type="UniProtKB" id="P03902"/>
    </source>
</evidence>
<evidence type="ECO:0000255" key="3"/>
<evidence type="ECO:0000305" key="4"/>
<organism>
    <name type="scientific">Nyctomys sumichrasti</name>
    <name type="common">Sumichrast's vesper rat</name>
    <dbReference type="NCBI Taxonomy" id="56227"/>
    <lineage>
        <taxon>Eukaryota</taxon>
        <taxon>Metazoa</taxon>
        <taxon>Chordata</taxon>
        <taxon>Craniata</taxon>
        <taxon>Vertebrata</taxon>
        <taxon>Euteleostomi</taxon>
        <taxon>Mammalia</taxon>
        <taxon>Eutheria</taxon>
        <taxon>Euarchontoglires</taxon>
        <taxon>Glires</taxon>
        <taxon>Rodentia</taxon>
        <taxon>Myomorpha</taxon>
        <taxon>Muroidea</taxon>
        <taxon>Cricetidae</taxon>
        <taxon>Tylomyinae</taxon>
        <taxon>Nyctomys</taxon>
    </lineage>
</organism>